<accession>Q3AN00</accession>
<reference key="1">
    <citation type="submission" date="2005-07" db="EMBL/GenBank/DDBJ databases">
        <title>Complete sequence of Synechococcus sp. CC9605.</title>
        <authorList>
            <consortium name="US DOE Joint Genome Institute"/>
            <person name="Copeland A."/>
            <person name="Lucas S."/>
            <person name="Lapidus A."/>
            <person name="Barry K."/>
            <person name="Detter J.C."/>
            <person name="Glavina T."/>
            <person name="Hammon N."/>
            <person name="Israni S."/>
            <person name="Pitluck S."/>
            <person name="Schmutz J."/>
            <person name="Martinez M."/>
            <person name="Larimer F."/>
            <person name="Land M."/>
            <person name="Kyrpides N."/>
            <person name="Ivanova N."/>
            <person name="Richardson P."/>
        </authorList>
    </citation>
    <scope>NUCLEOTIDE SEQUENCE [LARGE SCALE GENOMIC DNA]</scope>
    <source>
        <strain>CC9605</strain>
    </source>
</reference>
<feature type="chain" id="PRO_1000063628" description="3-isopropylmalate dehydratase large subunit">
    <location>
        <begin position="1"/>
        <end position="472"/>
    </location>
</feature>
<feature type="binding site" evidence="1">
    <location>
        <position position="347"/>
    </location>
    <ligand>
        <name>[4Fe-4S] cluster</name>
        <dbReference type="ChEBI" id="CHEBI:49883"/>
    </ligand>
</feature>
<feature type="binding site" evidence="1">
    <location>
        <position position="407"/>
    </location>
    <ligand>
        <name>[4Fe-4S] cluster</name>
        <dbReference type="ChEBI" id="CHEBI:49883"/>
    </ligand>
</feature>
<feature type="binding site" evidence="1">
    <location>
        <position position="410"/>
    </location>
    <ligand>
        <name>[4Fe-4S] cluster</name>
        <dbReference type="ChEBI" id="CHEBI:49883"/>
    </ligand>
</feature>
<organism>
    <name type="scientific">Synechococcus sp. (strain CC9605)</name>
    <dbReference type="NCBI Taxonomy" id="110662"/>
    <lineage>
        <taxon>Bacteria</taxon>
        <taxon>Bacillati</taxon>
        <taxon>Cyanobacteriota</taxon>
        <taxon>Cyanophyceae</taxon>
        <taxon>Synechococcales</taxon>
        <taxon>Synechococcaceae</taxon>
        <taxon>Synechococcus</taxon>
    </lineage>
</organism>
<gene>
    <name evidence="1" type="primary">leuC</name>
    <name type="ordered locus">Syncc9605_0256</name>
</gene>
<name>LEUC_SYNSC</name>
<evidence type="ECO:0000255" key="1">
    <source>
        <dbReference type="HAMAP-Rule" id="MF_01026"/>
    </source>
</evidence>
<protein>
    <recommendedName>
        <fullName evidence="1">3-isopropylmalate dehydratase large subunit</fullName>
        <ecNumber evidence="1">4.2.1.33</ecNumber>
    </recommendedName>
    <alternativeName>
        <fullName evidence="1">Alpha-IPM isomerase</fullName>
        <shortName evidence="1">IPMI</shortName>
    </alternativeName>
    <alternativeName>
        <fullName evidence="1">Isopropylmalate isomerase</fullName>
    </alternativeName>
</protein>
<keyword id="KW-0004">4Fe-4S</keyword>
<keyword id="KW-0028">Amino-acid biosynthesis</keyword>
<keyword id="KW-0100">Branched-chain amino acid biosynthesis</keyword>
<keyword id="KW-0408">Iron</keyword>
<keyword id="KW-0411">Iron-sulfur</keyword>
<keyword id="KW-0432">Leucine biosynthesis</keyword>
<keyword id="KW-0456">Lyase</keyword>
<keyword id="KW-0479">Metal-binding</keyword>
<comment type="function">
    <text evidence="1">Catalyzes the isomerization between 2-isopropylmalate and 3-isopropylmalate, via the formation of 2-isopropylmaleate.</text>
</comment>
<comment type="catalytic activity">
    <reaction evidence="1">
        <text>(2R,3S)-3-isopropylmalate = (2S)-2-isopropylmalate</text>
        <dbReference type="Rhea" id="RHEA:32287"/>
        <dbReference type="ChEBI" id="CHEBI:1178"/>
        <dbReference type="ChEBI" id="CHEBI:35121"/>
        <dbReference type="EC" id="4.2.1.33"/>
    </reaction>
</comment>
<comment type="cofactor">
    <cofactor evidence="1">
        <name>[4Fe-4S] cluster</name>
        <dbReference type="ChEBI" id="CHEBI:49883"/>
    </cofactor>
    <text evidence="1">Binds 1 [4Fe-4S] cluster per subunit.</text>
</comment>
<comment type="pathway">
    <text evidence="1">Amino-acid biosynthesis; L-leucine biosynthesis; L-leucine from 3-methyl-2-oxobutanoate: step 2/4.</text>
</comment>
<comment type="subunit">
    <text evidence="1">Heterodimer of LeuC and LeuD.</text>
</comment>
<comment type="similarity">
    <text evidence="1">Belongs to the aconitase/IPM isomerase family. LeuC type 1 subfamily.</text>
</comment>
<dbReference type="EC" id="4.2.1.33" evidence="1"/>
<dbReference type="EMBL" id="CP000110">
    <property type="protein sequence ID" value="ABB34032.1"/>
    <property type="molecule type" value="Genomic_DNA"/>
</dbReference>
<dbReference type="RefSeq" id="WP_011363286.1">
    <property type="nucleotide sequence ID" value="NC_007516.1"/>
</dbReference>
<dbReference type="SMR" id="Q3AN00"/>
<dbReference type="STRING" id="110662.Syncc9605_0256"/>
<dbReference type="KEGG" id="syd:Syncc9605_0256"/>
<dbReference type="eggNOG" id="COG0065">
    <property type="taxonomic scope" value="Bacteria"/>
</dbReference>
<dbReference type="HOGENOM" id="CLU_006714_3_4_3"/>
<dbReference type="OrthoDB" id="9802769at2"/>
<dbReference type="UniPathway" id="UPA00048">
    <property type="reaction ID" value="UER00071"/>
</dbReference>
<dbReference type="GO" id="GO:0003861">
    <property type="term" value="F:3-isopropylmalate dehydratase activity"/>
    <property type="evidence" value="ECO:0007669"/>
    <property type="project" value="UniProtKB-UniRule"/>
</dbReference>
<dbReference type="GO" id="GO:0051539">
    <property type="term" value="F:4 iron, 4 sulfur cluster binding"/>
    <property type="evidence" value="ECO:0007669"/>
    <property type="project" value="UniProtKB-KW"/>
</dbReference>
<dbReference type="GO" id="GO:0046872">
    <property type="term" value="F:metal ion binding"/>
    <property type="evidence" value="ECO:0007669"/>
    <property type="project" value="UniProtKB-KW"/>
</dbReference>
<dbReference type="GO" id="GO:0009098">
    <property type="term" value="P:L-leucine biosynthetic process"/>
    <property type="evidence" value="ECO:0007669"/>
    <property type="project" value="UniProtKB-UniRule"/>
</dbReference>
<dbReference type="CDD" id="cd01583">
    <property type="entry name" value="IPMI"/>
    <property type="match status" value="1"/>
</dbReference>
<dbReference type="Gene3D" id="3.30.499.10">
    <property type="entry name" value="Aconitase, domain 3"/>
    <property type="match status" value="2"/>
</dbReference>
<dbReference type="HAMAP" id="MF_01026">
    <property type="entry name" value="LeuC_type1"/>
    <property type="match status" value="1"/>
</dbReference>
<dbReference type="InterPro" id="IPR004430">
    <property type="entry name" value="3-IsopropMal_deHydase_lsu"/>
</dbReference>
<dbReference type="InterPro" id="IPR015931">
    <property type="entry name" value="Acnase/IPM_dHydase_lsu_aba_1/3"/>
</dbReference>
<dbReference type="InterPro" id="IPR001030">
    <property type="entry name" value="Acoase/IPM_deHydtase_lsu_aba"/>
</dbReference>
<dbReference type="InterPro" id="IPR018136">
    <property type="entry name" value="Aconitase_4Fe-4S_BS"/>
</dbReference>
<dbReference type="InterPro" id="IPR036008">
    <property type="entry name" value="Aconitase_4Fe-4S_dom"/>
</dbReference>
<dbReference type="InterPro" id="IPR050067">
    <property type="entry name" value="IPM_dehydratase_rel_enz"/>
</dbReference>
<dbReference type="InterPro" id="IPR033941">
    <property type="entry name" value="IPMI_cat"/>
</dbReference>
<dbReference type="NCBIfam" id="TIGR00170">
    <property type="entry name" value="leuC"/>
    <property type="match status" value="1"/>
</dbReference>
<dbReference type="NCBIfam" id="NF004016">
    <property type="entry name" value="PRK05478.1"/>
    <property type="match status" value="1"/>
</dbReference>
<dbReference type="NCBIfam" id="NF009116">
    <property type="entry name" value="PRK12466.1"/>
    <property type="match status" value="1"/>
</dbReference>
<dbReference type="PANTHER" id="PTHR43822:SF9">
    <property type="entry name" value="3-ISOPROPYLMALATE DEHYDRATASE"/>
    <property type="match status" value="1"/>
</dbReference>
<dbReference type="PANTHER" id="PTHR43822">
    <property type="entry name" value="HOMOACONITASE, MITOCHONDRIAL-RELATED"/>
    <property type="match status" value="1"/>
</dbReference>
<dbReference type="Pfam" id="PF00330">
    <property type="entry name" value="Aconitase"/>
    <property type="match status" value="1"/>
</dbReference>
<dbReference type="PRINTS" id="PR00415">
    <property type="entry name" value="ACONITASE"/>
</dbReference>
<dbReference type="SUPFAM" id="SSF53732">
    <property type="entry name" value="Aconitase iron-sulfur domain"/>
    <property type="match status" value="1"/>
</dbReference>
<dbReference type="PROSITE" id="PS00450">
    <property type="entry name" value="ACONITASE_1"/>
    <property type="match status" value="1"/>
</dbReference>
<dbReference type="PROSITE" id="PS01244">
    <property type="entry name" value="ACONITASE_2"/>
    <property type="match status" value="1"/>
</dbReference>
<sequence>MSSGTLYDKVWDLHRVAELPGGSTQLFVGLHLIHEVTSPQAFSALKDKGLLVRCPERTVATVDHIVPTTSQQRPFADPLAEEMLSTLERNCQEYGIPLNNIGSGRQGIVHVIAPELGLTQPGMTVACGDSHTSTHGAFGAIAFGIGTSQVRDVLASQSLAMNKLKVRRIQVNGLLPEGVSAKDLILHVIRHLGVKGGVGYAYEFAGSAIEALSMEERMTLCNMAIEGGARCGYVNPDQVTFEYLKGRPHAPEGDAWTRAVAWWSSLATDANATVDDEVVFDAAAIPPTVTWGITPGQGLGIDETVPSLDQLDPGERPIAEEAYRYMDLQPGTAIAGVPVDVCFIGSCTNGRLSDLRAAADVARGRQVAEGIKAFVVPGSEQVAKAAEAEGLDAVFRAAGFEWREPGCSMCLAMNPDRLEGRQISASSSNRNFKGRQGSASGRTLLMSPAMVAAAAVNGRVTDVRTLISPSAS</sequence>
<proteinExistence type="inferred from homology"/>